<accession>B0KAE1</accession>
<proteinExistence type="inferred from homology"/>
<comment type="function">
    <text evidence="1">Nucleoside triphosphate pyrophosphatase that hydrolyzes dTTP and UTP. May have a dual role in cell division arrest and in preventing the incorporation of modified nucleotides into cellular nucleic acids.</text>
</comment>
<comment type="catalytic activity">
    <reaction evidence="1">
        <text>dTTP + H2O = dTMP + diphosphate + H(+)</text>
        <dbReference type="Rhea" id="RHEA:28534"/>
        <dbReference type="ChEBI" id="CHEBI:15377"/>
        <dbReference type="ChEBI" id="CHEBI:15378"/>
        <dbReference type="ChEBI" id="CHEBI:33019"/>
        <dbReference type="ChEBI" id="CHEBI:37568"/>
        <dbReference type="ChEBI" id="CHEBI:63528"/>
        <dbReference type="EC" id="3.6.1.9"/>
    </reaction>
</comment>
<comment type="catalytic activity">
    <reaction evidence="1">
        <text>UTP + H2O = UMP + diphosphate + H(+)</text>
        <dbReference type="Rhea" id="RHEA:29395"/>
        <dbReference type="ChEBI" id="CHEBI:15377"/>
        <dbReference type="ChEBI" id="CHEBI:15378"/>
        <dbReference type="ChEBI" id="CHEBI:33019"/>
        <dbReference type="ChEBI" id="CHEBI:46398"/>
        <dbReference type="ChEBI" id="CHEBI:57865"/>
        <dbReference type="EC" id="3.6.1.9"/>
    </reaction>
</comment>
<comment type="cofactor">
    <cofactor evidence="1">
        <name>a divalent metal cation</name>
        <dbReference type="ChEBI" id="CHEBI:60240"/>
    </cofactor>
</comment>
<comment type="subcellular location">
    <subcellularLocation>
        <location evidence="1">Cytoplasm</location>
    </subcellularLocation>
</comment>
<comment type="similarity">
    <text evidence="1">Belongs to the Maf family. YhdE subfamily.</text>
</comment>
<name>NTPPA_THEP3</name>
<feature type="chain" id="PRO_1000127800" description="dTTP/UTP pyrophosphatase">
    <location>
        <begin position="1"/>
        <end position="191"/>
    </location>
</feature>
<feature type="active site" description="Proton acceptor" evidence="1">
    <location>
        <position position="68"/>
    </location>
</feature>
<feature type="site" description="Important for substrate specificity" evidence="1">
    <location>
        <position position="11"/>
    </location>
</feature>
<feature type="site" description="Important for substrate specificity" evidence="1">
    <location>
        <position position="69"/>
    </location>
</feature>
<feature type="site" description="Important for substrate specificity" evidence="1">
    <location>
        <position position="153"/>
    </location>
</feature>
<protein>
    <recommendedName>
        <fullName evidence="1">dTTP/UTP pyrophosphatase</fullName>
        <shortName evidence="1">dTTPase/UTPase</shortName>
        <ecNumber evidence="1">3.6.1.9</ecNumber>
    </recommendedName>
    <alternativeName>
        <fullName evidence="1">Nucleoside triphosphate pyrophosphatase</fullName>
    </alternativeName>
    <alternativeName>
        <fullName evidence="1">Nucleotide pyrophosphatase</fullName>
        <shortName evidence="1">Nucleotide PPase</shortName>
    </alternativeName>
</protein>
<sequence>MKIVLASKSPRRRELLSNLGLDFEVIESNVEEFSSEKHPSRYVMDLSFNKAMSVAKKLKEEAIVIGADTIVVIEDKVLGKPKDRDEAFIMLKNLQGRVHTVYTGITIVRTKDFKYVSDFEETKVWIKKLEDEEIFNYIDTGEGYDKAGAYAIQGVGALIVEKIEGDYFNVVGLPISKLFDILKREFDVRLL</sequence>
<reference key="1">
    <citation type="submission" date="2008-01" db="EMBL/GenBank/DDBJ databases">
        <title>Complete sequence of Thermoanaerobacter pseudethanolicus 39E.</title>
        <authorList>
            <person name="Copeland A."/>
            <person name="Lucas S."/>
            <person name="Lapidus A."/>
            <person name="Barry K."/>
            <person name="Glavina del Rio T."/>
            <person name="Dalin E."/>
            <person name="Tice H."/>
            <person name="Pitluck S."/>
            <person name="Bruce D."/>
            <person name="Goodwin L."/>
            <person name="Saunders E."/>
            <person name="Brettin T."/>
            <person name="Detter J.C."/>
            <person name="Han C."/>
            <person name="Schmutz J."/>
            <person name="Larimer F."/>
            <person name="Land M."/>
            <person name="Hauser L."/>
            <person name="Kyrpides N."/>
            <person name="Lykidis A."/>
            <person name="Hemme C."/>
            <person name="Fields M.W."/>
            <person name="He Z."/>
            <person name="Zhou J."/>
            <person name="Richardson P."/>
        </authorList>
    </citation>
    <scope>NUCLEOTIDE SEQUENCE [LARGE SCALE GENOMIC DNA]</scope>
    <source>
        <strain>ATCC 33223 / DSM 2355 / 39E</strain>
    </source>
</reference>
<organism>
    <name type="scientific">Thermoanaerobacter pseudethanolicus (strain ATCC 33223 / 39E)</name>
    <name type="common">Clostridium thermohydrosulfuricum</name>
    <dbReference type="NCBI Taxonomy" id="340099"/>
    <lineage>
        <taxon>Bacteria</taxon>
        <taxon>Bacillati</taxon>
        <taxon>Bacillota</taxon>
        <taxon>Clostridia</taxon>
        <taxon>Thermoanaerobacterales</taxon>
        <taxon>Thermoanaerobacteraceae</taxon>
        <taxon>Thermoanaerobacter</taxon>
    </lineage>
</organism>
<gene>
    <name type="ordered locus">Teth39_1454</name>
</gene>
<dbReference type="EC" id="3.6.1.9" evidence="1"/>
<dbReference type="EMBL" id="CP000924">
    <property type="protein sequence ID" value="ABY95104.1"/>
    <property type="molecule type" value="Genomic_DNA"/>
</dbReference>
<dbReference type="RefSeq" id="WP_003866929.1">
    <property type="nucleotide sequence ID" value="NC_010321.1"/>
</dbReference>
<dbReference type="SMR" id="B0KAE1"/>
<dbReference type="STRING" id="340099.Teth39_1454"/>
<dbReference type="KEGG" id="tpd:Teth39_1454"/>
<dbReference type="eggNOG" id="COG0424">
    <property type="taxonomic scope" value="Bacteria"/>
</dbReference>
<dbReference type="HOGENOM" id="CLU_040416_0_0_9"/>
<dbReference type="Proteomes" id="UP000002156">
    <property type="component" value="Chromosome"/>
</dbReference>
<dbReference type="GO" id="GO:0005737">
    <property type="term" value="C:cytoplasm"/>
    <property type="evidence" value="ECO:0007669"/>
    <property type="project" value="UniProtKB-SubCell"/>
</dbReference>
<dbReference type="GO" id="GO:0036218">
    <property type="term" value="F:dTTP diphosphatase activity"/>
    <property type="evidence" value="ECO:0007669"/>
    <property type="project" value="RHEA"/>
</dbReference>
<dbReference type="GO" id="GO:0036221">
    <property type="term" value="F:UTP diphosphatase activity"/>
    <property type="evidence" value="ECO:0007669"/>
    <property type="project" value="RHEA"/>
</dbReference>
<dbReference type="GO" id="GO:0009117">
    <property type="term" value="P:nucleotide metabolic process"/>
    <property type="evidence" value="ECO:0007669"/>
    <property type="project" value="UniProtKB-KW"/>
</dbReference>
<dbReference type="CDD" id="cd00555">
    <property type="entry name" value="Maf"/>
    <property type="match status" value="1"/>
</dbReference>
<dbReference type="FunFam" id="3.90.950.10:FF:000005">
    <property type="entry name" value="7-methyl-GTP pyrophosphatase"/>
    <property type="match status" value="1"/>
</dbReference>
<dbReference type="Gene3D" id="3.90.950.10">
    <property type="match status" value="1"/>
</dbReference>
<dbReference type="HAMAP" id="MF_00528">
    <property type="entry name" value="Maf"/>
    <property type="match status" value="1"/>
</dbReference>
<dbReference type="InterPro" id="IPR029001">
    <property type="entry name" value="ITPase-like_fam"/>
</dbReference>
<dbReference type="InterPro" id="IPR003697">
    <property type="entry name" value="Maf-like"/>
</dbReference>
<dbReference type="NCBIfam" id="TIGR00172">
    <property type="entry name" value="maf"/>
    <property type="match status" value="1"/>
</dbReference>
<dbReference type="PANTHER" id="PTHR43213">
    <property type="entry name" value="BIFUNCTIONAL DTTP/UTP PYROPHOSPHATASE/METHYLTRANSFERASE PROTEIN-RELATED"/>
    <property type="match status" value="1"/>
</dbReference>
<dbReference type="PANTHER" id="PTHR43213:SF5">
    <property type="entry name" value="BIFUNCTIONAL DTTP_UTP PYROPHOSPHATASE_METHYLTRANSFERASE PROTEIN-RELATED"/>
    <property type="match status" value="1"/>
</dbReference>
<dbReference type="Pfam" id="PF02545">
    <property type="entry name" value="Maf"/>
    <property type="match status" value="1"/>
</dbReference>
<dbReference type="PIRSF" id="PIRSF006305">
    <property type="entry name" value="Maf"/>
    <property type="match status" value="1"/>
</dbReference>
<dbReference type="SUPFAM" id="SSF52972">
    <property type="entry name" value="ITPase-like"/>
    <property type="match status" value="1"/>
</dbReference>
<keyword id="KW-0963">Cytoplasm</keyword>
<keyword id="KW-0378">Hydrolase</keyword>
<keyword id="KW-0546">Nucleotide metabolism</keyword>
<keyword id="KW-1185">Reference proteome</keyword>
<evidence type="ECO:0000255" key="1">
    <source>
        <dbReference type="HAMAP-Rule" id="MF_00528"/>
    </source>
</evidence>